<accession>Q9CR26</accession>
<protein>
    <recommendedName>
        <fullName>Vacuolar protein sorting-associated protein VTA1 homolog</fullName>
    </recommendedName>
    <alternativeName>
        <fullName>SKD1-binding protein 1</fullName>
        <shortName>SBP1</shortName>
    </alternativeName>
</protein>
<evidence type="ECO:0000250" key="1"/>
<evidence type="ECO:0000250" key="2">
    <source>
        <dbReference type="UniProtKB" id="Q9NP79"/>
    </source>
</evidence>
<evidence type="ECO:0000256" key="3">
    <source>
        <dbReference type="SAM" id="MobiDB-lite"/>
    </source>
</evidence>
<evidence type="ECO:0000269" key="4">
    <source>
    </source>
</evidence>
<evidence type="ECO:0000305" key="5"/>
<dbReference type="EMBL" id="AK002611">
    <property type="protein sequence ID" value="BAB22228.1"/>
    <property type="molecule type" value="mRNA"/>
</dbReference>
<dbReference type="EMBL" id="AK009227">
    <property type="protein sequence ID" value="BAB26150.1"/>
    <property type="molecule type" value="mRNA"/>
</dbReference>
<dbReference type="EMBL" id="BC026752">
    <property type="protein sequence ID" value="AAH26752.1"/>
    <property type="molecule type" value="mRNA"/>
</dbReference>
<dbReference type="CCDS" id="CCDS23705.1"/>
<dbReference type="RefSeq" id="NP_079694.2">
    <property type="nucleotide sequence ID" value="NM_025418.3"/>
</dbReference>
<dbReference type="BMRB" id="Q9CR26"/>
<dbReference type="SMR" id="Q9CR26"/>
<dbReference type="BioGRID" id="211293">
    <property type="interactions" value="13"/>
</dbReference>
<dbReference type="DIP" id="DIP-54810N"/>
<dbReference type="FunCoup" id="Q9CR26">
    <property type="interactions" value="5309"/>
</dbReference>
<dbReference type="IntAct" id="Q9CR26">
    <property type="interactions" value="3"/>
</dbReference>
<dbReference type="STRING" id="10090.ENSMUSP00000119829"/>
<dbReference type="iPTMnet" id="Q9CR26"/>
<dbReference type="PhosphoSitePlus" id="Q9CR26"/>
<dbReference type="SwissPalm" id="Q9CR26"/>
<dbReference type="CPTAC" id="non-CPTAC-3754"/>
<dbReference type="jPOST" id="Q9CR26"/>
<dbReference type="PaxDb" id="10090-ENSMUSP00000119829"/>
<dbReference type="PeptideAtlas" id="Q9CR26"/>
<dbReference type="ProteomicsDB" id="297614"/>
<dbReference type="Pumba" id="Q9CR26"/>
<dbReference type="Antibodypedia" id="33094">
    <property type="antibodies" value="133 antibodies from 23 providers"/>
</dbReference>
<dbReference type="DNASU" id="66201"/>
<dbReference type="Ensembl" id="ENSMUST00000154132.8">
    <property type="protein sequence ID" value="ENSMUSP00000119829.2"/>
    <property type="gene ID" value="ENSMUSG00000019868.17"/>
</dbReference>
<dbReference type="GeneID" id="66201"/>
<dbReference type="KEGG" id="mmu:66201"/>
<dbReference type="UCSC" id="uc007ell.1">
    <property type="organism name" value="mouse"/>
</dbReference>
<dbReference type="AGR" id="MGI:1913451"/>
<dbReference type="CTD" id="51534"/>
<dbReference type="MGI" id="MGI:1913451">
    <property type="gene designation" value="Vta1"/>
</dbReference>
<dbReference type="VEuPathDB" id="HostDB:ENSMUSG00000019868"/>
<dbReference type="eggNOG" id="KOG0917">
    <property type="taxonomic scope" value="Eukaryota"/>
</dbReference>
<dbReference type="GeneTree" id="ENSGT00390000011342"/>
<dbReference type="InParanoid" id="Q9CR26"/>
<dbReference type="OMA" id="AYWCEYH"/>
<dbReference type="OrthoDB" id="391137at2759"/>
<dbReference type="PhylomeDB" id="Q9CR26"/>
<dbReference type="TreeFam" id="TF105917"/>
<dbReference type="Reactome" id="R-MMU-917729">
    <property type="pathway name" value="Endosomal Sorting Complex Required For Transport (ESCRT)"/>
</dbReference>
<dbReference type="BioGRID-ORCS" id="66201">
    <property type="hits" value="3 hits in 77 CRISPR screens"/>
</dbReference>
<dbReference type="ChiTaRS" id="Vta1">
    <property type="organism name" value="mouse"/>
</dbReference>
<dbReference type="PRO" id="PR:Q9CR26"/>
<dbReference type="Proteomes" id="UP000000589">
    <property type="component" value="Chromosome 10"/>
</dbReference>
<dbReference type="RNAct" id="Q9CR26">
    <property type="molecule type" value="protein"/>
</dbReference>
<dbReference type="Bgee" id="ENSMUSG00000019868">
    <property type="expression patterns" value="Expressed in animal zygote and 261 other cell types or tissues"/>
</dbReference>
<dbReference type="ExpressionAtlas" id="Q9CR26">
    <property type="expression patterns" value="baseline and differential"/>
</dbReference>
<dbReference type="GO" id="GO:0005737">
    <property type="term" value="C:cytoplasm"/>
    <property type="evidence" value="ECO:0000314"/>
    <property type="project" value="MGI"/>
</dbReference>
<dbReference type="GO" id="GO:0005829">
    <property type="term" value="C:cytosol"/>
    <property type="evidence" value="ECO:0007669"/>
    <property type="project" value="Ensembl"/>
</dbReference>
<dbReference type="GO" id="GO:0010008">
    <property type="term" value="C:endosome membrane"/>
    <property type="evidence" value="ECO:0007669"/>
    <property type="project" value="UniProtKB-SubCell"/>
</dbReference>
<dbReference type="GO" id="GO:0005654">
    <property type="term" value="C:nucleoplasm"/>
    <property type="evidence" value="ECO:0007669"/>
    <property type="project" value="Ensembl"/>
</dbReference>
<dbReference type="GO" id="GO:0032511">
    <property type="term" value="P:late endosome to vacuole transport via multivesicular body sorting pathway"/>
    <property type="evidence" value="ECO:0007669"/>
    <property type="project" value="InterPro"/>
</dbReference>
<dbReference type="GO" id="GO:0015031">
    <property type="term" value="P:protein transport"/>
    <property type="evidence" value="ECO:0007669"/>
    <property type="project" value="UniProtKB-KW"/>
</dbReference>
<dbReference type="FunFam" id="1.20.5.420:FF:000001">
    <property type="entry name" value="Vacuolar protein sorting-associated protein VTA1 homolog"/>
    <property type="match status" value="1"/>
</dbReference>
<dbReference type="FunFam" id="1.25.40.270:FF:000001">
    <property type="entry name" value="vacuolar protein sorting-associated protein VTA1 homolog"/>
    <property type="match status" value="1"/>
</dbReference>
<dbReference type="Gene3D" id="1.20.5.420">
    <property type="entry name" value="Immunoglobulin FC, subunit C"/>
    <property type="match status" value="1"/>
</dbReference>
<dbReference type="Gene3D" id="1.25.40.270">
    <property type="entry name" value="Vacuolar protein sorting-associated protein vta1"/>
    <property type="match status" value="1"/>
</dbReference>
<dbReference type="InterPro" id="IPR044538">
    <property type="entry name" value="Vta1-like"/>
</dbReference>
<dbReference type="InterPro" id="IPR039431">
    <property type="entry name" value="Vta1/CALS_N"/>
</dbReference>
<dbReference type="InterPro" id="IPR023175">
    <property type="entry name" value="Vta1/CALS_N_sf"/>
</dbReference>
<dbReference type="InterPro" id="IPR041212">
    <property type="entry name" value="Vta1_C"/>
</dbReference>
<dbReference type="PANTHER" id="PTHR46009">
    <property type="entry name" value="VACUOLAR PROTEIN SORTING-ASSOCIATED PROTEIN VTA1 HOMOLOG"/>
    <property type="match status" value="1"/>
</dbReference>
<dbReference type="PANTHER" id="PTHR46009:SF1">
    <property type="entry name" value="VACUOLAR PROTEIN SORTING-ASSOCIATED PROTEIN VTA1 HOMOLOG"/>
    <property type="match status" value="1"/>
</dbReference>
<dbReference type="Pfam" id="PF04652">
    <property type="entry name" value="Vta1"/>
    <property type="match status" value="1"/>
</dbReference>
<dbReference type="Pfam" id="PF18097">
    <property type="entry name" value="Vta1_C"/>
    <property type="match status" value="1"/>
</dbReference>
<reference key="1">
    <citation type="journal article" date="2005" name="Science">
        <title>The transcriptional landscape of the mammalian genome.</title>
        <authorList>
            <person name="Carninci P."/>
            <person name="Kasukawa T."/>
            <person name="Katayama S."/>
            <person name="Gough J."/>
            <person name="Frith M.C."/>
            <person name="Maeda N."/>
            <person name="Oyama R."/>
            <person name="Ravasi T."/>
            <person name="Lenhard B."/>
            <person name="Wells C."/>
            <person name="Kodzius R."/>
            <person name="Shimokawa K."/>
            <person name="Bajic V.B."/>
            <person name="Brenner S.E."/>
            <person name="Batalov S."/>
            <person name="Forrest A.R."/>
            <person name="Zavolan M."/>
            <person name="Davis M.J."/>
            <person name="Wilming L.G."/>
            <person name="Aidinis V."/>
            <person name="Allen J.E."/>
            <person name="Ambesi-Impiombato A."/>
            <person name="Apweiler R."/>
            <person name="Aturaliya R.N."/>
            <person name="Bailey T.L."/>
            <person name="Bansal M."/>
            <person name="Baxter L."/>
            <person name="Beisel K.W."/>
            <person name="Bersano T."/>
            <person name="Bono H."/>
            <person name="Chalk A.M."/>
            <person name="Chiu K.P."/>
            <person name="Choudhary V."/>
            <person name="Christoffels A."/>
            <person name="Clutterbuck D.R."/>
            <person name="Crowe M.L."/>
            <person name="Dalla E."/>
            <person name="Dalrymple B.P."/>
            <person name="de Bono B."/>
            <person name="Della Gatta G."/>
            <person name="di Bernardo D."/>
            <person name="Down T."/>
            <person name="Engstrom P."/>
            <person name="Fagiolini M."/>
            <person name="Faulkner G."/>
            <person name="Fletcher C.F."/>
            <person name="Fukushima T."/>
            <person name="Furuno M."/>
            <person name="Futaki S."/>
            <person name="Gariboldi M."/>
            <person name="Georgii-Hemming P."/>
            <person name="Gingeras T.R."/>
            <person name="Gojobori T."/>
            <person name="Green R.E."/>
            <person name="Gustincich S."/>
            <person name="Harbers M."/>
            <person name="Hayashi Y."/>
            <person name="Hensch T.K."/>
            <person name="Hirokawa N."/>
            <person name="Hill D."/>
            <person name="Huminiecki L."/>
            <person name="Iacono M."/>
            <person name="Ikeo K."/>
            <person name="Iwama A."/>
            <person name="Ishikawa T."/>
            <person name="Jakt M."/>
            <person name="Kanapin A."/>
            <person name="Katoh M."/>
            <person name="Kawasawa Y."/>
            <person name="Kelso J."/>
            <person name="Kitamura H."/>
            <person name="Kitano H."/>
            <person name="Kollias G."/>
            <person name="Krishnan S.P."/>
            <person name="Kruger A."/>
            <person name="Kummerfeld S.K."/>
            <person name="Kurochkin I.V."/>
            <person name="Lareau L.F."/>
            <person name="Lazarevic D."/>
            <person name="Lipovich L."/>
            <person name="Liu J."/>
            <person name="Liuni S."/>
            <person name="McWilliam S."/>
            <person name="Madan Babu M."/>
            <person name="Madera M."/>
            <person name="Marchionni L."/>
            <person name="Matsuda H."/>
            <person name="Matsuzawa S."/>
            <person name="Miki H."/>
            <person name="Mignone F."/>
            <person name="Miyake S."/>
            <person name="Morris K."/>
            <person name="Mottagui-Tabar S."/>
            <person name="Mulder N."/>
            <person name="Nakano N."/>
            <person name="Nakauchi H."/>
            <person name="Ng P."/>
            <person name="Nilsson R."/>
            <person name="Nishiguchi S."/>
            <person name="Nishikawa S."/>
            <person name="Nori F."/>
            <person name="Ohara O."/>
            <person name="Okazaki Y."/>
            <person name="Orlando V."/>
            <person name="Pang K.C."/>
            <person name="Pavan W.J."/>
            <person name="Pavesi G."/>
            <person name="Pesole G."/>
            <person name="Petrovsky N."/>
            <person name="Piazza S."/>
            <person name="Reed J."/>
            <person name="Reid J.F."/>
            <person name="Ring B.Z."/>
            <person name="Ringwald M."/>
            <person name="Rost B."/>
            <person name="Ruan Y."/>
            <person name="Salzberg S.L."/>
            <person name="Sandelin A."/>
            <person name="Schneider C."/>
            <person name="Schoenbach C."/>
            <person name="Sekiguchi K."/>
            <person name="Semple C.A."/>
            <person name="Seno S."/>
            <person name="Sessa L."/>
            <person name="Sheng Y."/>
            <person name="Shibata Y."/>
            <person name="Shimada H."/>
            <person name="Shimada K."/>
            <person name="Silva D."/>
            <person name="Sinclair B."/>
            <person name="Sperling S."/>
            <person name="Stupka E."/>
            <person name="Sugiura K."/>
            <person name="Sultana R."/>
            <person name="Takenaka Y."/>
            <person name="Taki K."/>
            <person name="Tammoja K."/>
            <person name="Tan S.L."/>
            <person name="Tang S."/>
            <person name="Taylor M.S."/>
            <person name="Tegner J."/>
            <person name="Teichmann S.A."/>
            <person name="Ueda H.R."/>
            <person name="van Nimwegen E."/>
            <person name="Verardo R."/>
            <person name="Wei C.L."/>
            <person name="Yagi K."/>
            <person name="Yamanishi H."/>
            <person name="Zabarovsky E."/>
            <person name="Zhu S."/>
            <person name="Zimmer A."/>
            <person name="Hide W."/>
            <person name="Bult C."/>
            <person name="Grimmond S.M."/>
            <person name="Teasdale R.D."/>
            <person name="Liu E.T."/>
            <person name="Brusic V."/>
            <person name="Quackenbush J."/>
            <person name="Wahlestedt C."/>
            <person name="Mattick J.S."/>
            <person name="Hume D.A."/>
            <person name="Kai C."/>
            <person name="Sasaki D."/>
            <person name="Tomaru Y."/>
            <person name="Fukuda S."/>
            <person name="Kanamori-Katayama M."/>
            <person name="Suzuki M."/>
            <person name="Aoki J."/>
            <person name="Arakawa T."/>
            <person name="Iida J."/>
            <person name="Imamura K."/>
            <person name="Itoh M."/>
            <person name="Kato T."/>
            <person name="Kawaji H."/>
            <person name="Kawagashira N."/>
            <person name="Kawashima T."/>
            <person name="Kojima M."/>
            <person name="Kondo S."/>
            <person name="Konno H."/>
            <person name="Nakano K."/>
            <person name="Ninomiya N."/>
            <person name="Nishio T."/>
            <person name="Okada M."/>
            <person name="Plessy C."/>
            <person name="Shibata K."/>
            <person name="Shiraki T."/>
            <person name="Suzuki S."/>
            <person name="Tagami M."/>
            <person name="Waki K."/>
            <person name="Watahiki A."/>
            <person name="Okamura-Oho Y."/>
            <person name="Suzuki H."/>
            <person name="Kawai J."/>
            <person name="Hayashizaki Y."/>
        </authorList>
    </citation>
    <scope>NUCLEOTIDE SEQUENCE [LARGE SCALE MRNA]</scope>
    <source>
        <strain>C57BL/6J</strain>
        <tissue>Kidney</tissue>
        <tissue>Tongue</tissue>
    </source>
</reference>
<reference key="2">
    <citation type="journal article" date="2004" name="Genome Res.">
        <title>The status, quality, and expansion of the NIH full-length cDNA project: the Mammalian Gene Collection (MGC).</title>
        <authorList>
            <consortium name="The MGC Project Team"/>
        </authorList>
    </citation>
    <scope>NUCLEOTIDE SEQUENCE [LARGE SCALE MRNA]</scope>
</reference>
<reference key="3">
    <citation type="journal article" date="2004" name="J. Cell Sci.">
        <title>Mammalian class E Vps proteins, SBP1 and mVps2/CHMP2A, interact with and regulate the function of an AAA-ATPase SKD1/Vps4B.</title>
        <authorList>
            <person name="Fujita H."/>
            <person name="Umezuki Y."/>
            <person name="Imamura K."/>
            <person name="Ishikawa D."/>
            <person name="Uchimura S."/>
            <person name="Nara A."/>
            <person name="Yoshimori T."/>
            <person name="Hayashizaki Y."/>
            <person name="Kawai J."/>
            <person name="Ishidoh K."/>
            <person name="Tanaka Y."/>
            <person name="Himeno M."/>
        </authorList>
    </citation>
    <scope>FUNCTION</scope>
    <scope>INTERACTION WITH VPS4B</scope>
    <scope>TISSUE SPECIFICITY</scope>
    <scope>SUBCELLULAR LOCATION</scope>
</reference>
<reference key="4">
    <citation type="journal article" date="2010" name="Cell">
        <title>A tissue-specific atlas of mouse protein phosphorylation and expression.</title>
        <authorList>
            <person name="Huttlin E.L."/>
            <person name="Jedrychowski M.P."/>
            <person name="Elias J.E."/>
            <person name="Goswami T."/>
            <person name="Rad R."/>
            <person name="Beausoleil S.A."/>
            <person name="Villen J."/>
            <person name="Haas W."/>
            <person name="Sowa M.E."/>
            <person name="Gygi S.P."/>
        </authorList>
    </citation>
    <scope>IDENTIFICATION BY MASS SPECTROMETRY [LARGE SCALE ANALYSIS]</scope>
    <source>
        <tissue>Brain</tissue>
        <tissue>Brown adipose tissue</tissue>
        <tissue>Heart</tissue>
        <tissue>Kidney</tissue>
        <tissue>Liver</tissue>
        <tissue>Lung</tissue>
        <tissue>Pancreas</tissue>
        <tissue>Spleen</tissue>
        <tissue>Testis</tissue>
    </source>
</reference>
<proteinExistence type="evidence at protein level"/>
<organism>
    <name type="scientific">Mus musculus</name>
    <name type="common">Mouse</name>
    <dbReference type="NCBI Taxonomy" id="10090"/>
    <lineage>
        <taxon>Eukaryota</taxon>
        <taxon>Metazoa</taxon>
        <taxon>Chordata</taxon>
        <taxon>Craniata</taxon>
        <taxon>Vertebrata</taxon>
        <taxon>Euteleostomi</taxon>
        <taxon>Mammalia</taxon>
        <taxon>Eutheria</taxon>
        <taxon>Euarchontoglires</taxon>
        <taxon>Glires</taxon>
        <taxon>Rodentia</taxon>
        <taxon>Myomorpha</taxon>
        <taxon>Muroidea</taxon>
        <taxon>Muridae</taxon>
        <taxon>Murinae</taxon>
        <taxon>Mus</taxon>
        <taxon>Mus</taxon>
    </lineage>
</organism>
<gene>
    <name type="primary">Vta1</name>
</gene>
<feature type="initiator methionine" description="Removed" evidence="2">
    <location>
        <position position="1"/>
    </location>
</feature>
<feature type="chain" id="PRO_0000089510" description="Vacuolar protein sorting-associated protein VTA1 homolog">
    <location>
        <begin position="2"/>
        <end position="309"/>
    </location>
</feature>
<feature type="region of interest" description="Interaction with IST1" evidence="1">
    <location>
        <begin position="2"/>
        <end position="186"/>
    </location>
</feature>
<feature type="region of interest" description="Interaction with CHMP5" evidence="1">
    <location>
        <begin position="2"/>
        <end position="75"/>
    </location>
</feature>
<feature type="region of interest" description="Disordered" evidence="3">
    <location>
        <begin position="173"/>
        <end position="254"/>
    </location>
</feature>
<feature type="region of interest" description="Interaction with VPS4B" evidence="4">
    <location>
        <begin position="198"/>
        <end position="309"/>
    </location>
</feature>
<feature type="compositionally biased region" description="Polar residues" evidence="3">
    <location>
        <begin position="232"/>
        <end position="245"/>
    </location>
</feature>
<feature type="modified residue" description="N-acetylalanine" evidence="2">
    <location>
        <position position="2"/>
    </location>
</feature>
<sequence length="309" mass="33913">MAALAPLPPLPAQFKSIQHHLRTAQEHDKRDPVVAYYCRLYAMQTGMKIDSKTPECRKFLSKLMDQLEALKKQLGDNEAVTQEIVGCAHLENYALKMFLYADNEDRAGRFHKNMIKSFYTASLLIDVITVFGELTDENVKHRKYARWKATYIHNCLKNGETPQAGPVGIEEENDVEENEDVGATSLPTQPPQPSSSSAYDPSNLAPGSYSGIQIPPGAHAPANTPAEVPHSTGVTSNAVQPSPQTVPAAPAVDPDLYTASQGDIRLTPEDFARAQKYCKYAGSALQYEDVGTAVQNLQKALRLLTTGRE</sequence>
<comment type="function">
    <text evidence="1 4">Involved in the endosomal multivesicular bodies (MVB) pathway. MVBs contain intraluminal vesicles (ILVs) that are generated by invagination and scission from the limiting membrane of the endosome and mostly are delivered to lysosomes enabling degradation of membrane proteins, such as stimulated growth factor receptors, lysosomal enzymes and lipids. Thought to be a cofactor of VPS4A/B, which catalyzes disassembles membrane-associated ESCRT-III assemblies (By similarity). Involved in the sorting and down-regulation of EGFR.</text>
</comment>
<comment type="subunit">
    <text evidence="1">Interacts with VPS4B. Interacts with CHMP1B. Interacts with CHMP2A; the interaction probably involves the open conformation of (polymerized) CHMP2A. Interacts with CHMP3. Interacts with CHMP5; the interaction involves soluble CHMP5. Interacts with IST1 (By similarity).</text>
</comment>
<comment type="subcellular location">
    <subcellularLocation>
        <location evidence="4">Cytoplasm</location>
    </subcellularLocation>
    <subcellularLocation>
        <location evidence="4">Endosome membrane</location>
        <topology evidence="4">Peripheral membrane protein</topology>
    </subcellularLocation>
</comment>
<comment type="tissue specificity">
    <text evidence="4">Widely expressed. Expressed in brain, liver, kidney, spleen, lung and heart (at protein level).</text>
</comment>
<comment type="similarity">
    <text evidence="5">Belongs to the VTA1 family.</text>
</comment>
<keyword id="KW-0007">Acetylation</keyword>
<keyword id="KW-0963">Cytoplasm</keyword>
<keyword id="KW-0967">Endosome</keyword>
<keyword id="KW-0472">Membrane</keyword>
<keyword id="KW-0653">Protein transport</keyword>
<keyword id="KW-1185">Reference proteome</keyword>
<keyword id="KW-0813">Transport</keyword>
<name>VTA1_MOUSE</name>